<name>OXLA_CRODU</name>
<keyword id="KW-0044">Antibiotic</keyword>
<keyword id="KW-0929">Antimicrobial</keyword>
<keyword id="KW-0053">Apoptosis</keyword>
<keyword id="KW-0204">Cytolysis</keyword>
<keyword id="KW-0903">Direct protein sequencing</keyword>
<keyword id="KW-1015">Disulfide bond</keyword>
<keyword id="KW-0274">FAD</keyword>
<keyword id="KW-0285">Flavoprotein</keyword>
<keyword id="KW-0325">Glycoprotein</keyword>
<keyword id="KW-1199">Hemostasis impairing toxin</keyword>
<keyword id="KW-0560">Oxidoreductase</keyword>
<keyword id="KW-1201">Platelet aggregation inhibiting toxin</keyword>
<keyword id="KW-0964">Secreted</keyword>
<keyword id="KW-0732">Signal</keyword>
<keyword id="KW-0800">Toxin</keyword>
<proteinExistence type="evidence at protein level"/>
<accession>C0HJE7</accession>
<sequence>MNVFFMFSLLFLAALGSCAHDRNPLEECFRETDYEEFLEIARNGLTVTSNPKHVVIVGAGMAGLSAAYVLAGAGHQVTVLEASERVGGRVRTYRKKDWYANLGPMRLPTKHRIVREYIRKFGLQLNEFFQENENAWYFIKNIRKRVREVKNNPGILEYPVKPSEEGKSAAQLYVESLRKVVKELKRTNCKYILDKYDTYSTKEYLLKEGNLSPGAVDMIGDLLNEDSGYYVSFIESLKHDDIFGYEKRFDEIVGGMDQLPTSMYEAIKEKVQVHFNARVIEIQQNDRETKVTYQTSANEMSSVTADYVIVCTTSRAARRIKFEPPLPPKKAHALRSVHYRSGTKIFLTCKRKFWEDDGIRGGKSTTDLPSRFIYYPNHNFTSGVGVIIAYGIGDDANFFQALDFKDCADIVINDLSLIHQLPKEDIQTFCRPSMIQRWSLDKYAMGGITTFTPYQFQHFSEALTAPFKRIYFAGEYTAQFHGWIDSTIKSGLTAARDVNRASENPSGIHLSNDNEF</sequence>
<feature type="signal peptide" evidence="3">
    <location>
        <begin position="1"/>
        <end position="18"/>
    </location>
</feature>
<feature type="chain" id="PRO_0000438321" description="L-amino acid oxidase bordonein-L">
    <location>
        <begin position="19"/>
        <end position="516"/>
    </location>
</feature>
<feature type="binding site" evidence="2">
    <location>
        <begin position="61"/>
        <end position="62"/>
    </location>
    <ligand>
        <name>FAD</name>
        <dbReference type="ChEBI" id="CHEBI:57692"/>
    </ligand>
</feature>
<feature type="binding site" evidence="2">
    <location>
        <begin position="81"/>
        <end position="82"/>
    </location>
    <ligand>
        <name>FAD</name>
        <dbReference type="ChEBI" id="CHEBI:57692"/>
    </ligand>
</feature>
<feature type="binding site" evidence="2">
    <location>
        <position position="89"/>
    </location>
    <ligand>
        <name>FAD</name>
        <dbReference type="ChEBI" id="CHEBI:57692"/>
    </ligand>
</feature>
<feature type="binding site" evidence="2">
    <location>
        <begin position="103"/>
        <end position="106"/>
    </location>
    <ligand>
        <name>FAD</name>
        <dbReference type="ChEBI" id="CHEBI:57692"/>
    </ligand>
</feature>
<feature type="binding site" evidence="2">
    <location>
        <position position="106"/>
    </location>
    <ligand>
        <name>substrate</name>
    </ligand>
</feature>
<feature type="binding site" evidence="2">
    <location>
        <position position="239"/>
    </location>
    <ligand>
        <name>substrate</name>
    </ligand>
</feature>
<feature type="binding site" evidence="2">
    <location>
        <position position="279"/>
    </location>
    <ligand>
        <name>FAD</name>
        <dbReference type="ChEBI" id="CHEBI:57692"/>
    </ligand>
</feature>
<feature type="binding site" evidence="2">
    <location>
        <position position="390"/>
    </location>
    <ligand>
        <name>substrate</name>
    </ligand>
</feature>
<feature type="binding site" evidence="2">
    <location>
        <position position="475"/>
    </location>
    <ligand>
        <name>FAD</name>
        <dbReference type="ChEBI" id="CHEBI:57692"/>
    </ligand>
</feature>
<feature type="binding site" evidence="2">
    <location>
        <begin position="482"/>
        <end position="487"/>
    </location>
    <ligand>
        <name>FAD</name>
        <dbReference type="ChEBI" id="CHEBI:57692"/>
    </ligand>
</feature>
<feature type="binding site" evidence="2">
    <location>
        <begin position="482"/>
        <end position="483"/>
    </location>
    <ligand>
        <name>substrate</name>
    </ligand>
</feature>
<feature type="glycosylation site" description="N-linked (GlcNAc...) asparagine" evidence="9">
    <location>
        <position position="379"/>
    </location>
</feature>
<feature type="disulfide bond" evidence="5">
    <location>
        <begin position="28"/>
        <end position="189"/>
    </location>
</feature>
<feature type="disulfide bond" evidence="5">
    <location>
        <begin position="349"/>
        <end position="430"/>
    </location>
</feature>
<evidence type="ECO:0000250" key="1">
    <source>
        <dbReference type="UniProtKB" id="P0C2D2"/>
    </source>
</evidence>
<evidence type="ECO:0000250" key="2">
    <source>
        <dbReference type="UniProtKB" id="P81382"/>
    </source>
</evidence>
<evidence type="ECO:0000255" key="3"/>
<evidence type="ECO:0000269" key="4">
    <source>
    </source>
</evidence>
<evidence type="ECO:0000269" key="5">
    <source>
    </source>
</evidence>
<evidence type="ECO:0000303" key="6">
    <source>
    </source>
</evidence>
<evidence type="ECO:0000305" key="7"/>
<evidence type="ECO:0000305" key="8">
    <source>
    </source>
</evidence>
<evidence type="ECO:0000305" key="9">
    <source>
    </source>
</evidence>
<organism>
    <name type="scientific">Crotalus durissus terrificus</name>
    <name type="common">South American rattlesnake</name>
    <dbReference type="NCBI Taxonomy" id="8732"/>
    <lineage>
        <taxon>Eukaryota</taxon>
        <taxon>Metazoa</taxon>
        <taxon>Chordata</taxon>
        <taxon>Craniata</taxon>
        <taxon>Vertebrata</taxon>
        <taxon>Euteleostomi</taxon>
        <taxon>Lepidosauria</taxon>
        <taxon>Squamata</taxon>
        <taxon>Bifurcata</taxon>
        <taxon>Unidentata</taxon>
        <taxon>Episquamata</taxon>
        <taxon>Toxicofera</taxon>
        <taxon>Serpentes</taxon>
        <taxon>Colubroidea</taxon>
        <taxon>Viperidae</taxon>
        <taxon>Crotalinae</taxon>
        <taxon>Crotalus</taxon>
    </lineage>
</organism>
<dbReference type="EC" id="1.4.3.2" evidence="4 5"/>
<dbReference type="SMR" id="C0HJE7"/>
<dbReference type="iPTMnet" id="C0HJE7"/>
<dbReference type="GO" id="GO:0005576">
    <property type="term" value="C:extracellular region"/>
    <property type="evidence" value="ECO:0007669"/>
    <property type="project" value="UniProtKB-SubCell"/>
</dbReference>
<dbReference type="GO" id="GO:0106329">
    <property type="term" value="F:L-phenylalaine oxidase activity"/>
    <property type="evidence" value="ECO:0007669"/>
    <property type="project" value="RHEA"/>
</dbReference>
<dbReference type="GO" id="GO:0090729">
    <property type="term" value="F:toxin activity"/>
    <property type="evidence" value="ECO:0007669"/>
    <property type="project" value="UniProtKB-KW"/>
</dbReference>
<dbReference type="GO" id="GO:0009063">
    <property type="term" value="P:amino acid catabolic process"/>
    <property type="evidence" value="ECO:0007669"/>
    <property type="project" value="TreeGrafter"/>
</dbReference>
<dbReference type="GO" id="GO:0006915">
    <property type="term" value="P:apoptotic process"/>
    <property type="evidence" value="ECO:0007669"/>
    <property type="project" value="UniProtKB-KW"/>
</dbReference>
<dbReference type="GO" id="GO:0042742">
    <property type="term" value="P:defense response to bacterium"/>
    <property type="evidence" value="ECO:0007669"/>
    <property type="project" value="UniProtKB-KW"/>
</dbReference>
<dbReference type="GO" id="GO:0031640">
    <property type="term" value="P:killing of cells of another organism"/>
    <property type="evidence" value="ECO:0007669"/>
    <property type="project" value="UniProtKB-KW"/>
</dbReference>
<dbReference type="FunFam" id="1.10.405.10:FF:000004">
    <property type="entry name" value="Amine oxidase"/>
    <property type="match status" value="1"/>
</dbReference>
<dbReference type="FunFam" id="3.50.50.60:FF:000450">
    <property type="entry name" value="Amine oxidase"/>
    <property type="match status" value="1"/>
</dbReference>
<dbReference type="Gene3D" id="3.90.660.10">
    <property type="match status" value="1"/>
</dbReference>
<dbReference type="Gene3D" id="3.50.50.60">
    <property type="entry name" value="FAD/NAD(P)-binding domain"/>
    <property type="match status" value="1"/>
</dbReference>
<dbReference type="Gene3D" id="1.10.405.10">
    <property type="entry name" value="Guanine Nucleotide Dissociation Inhibitor, domain 1"/>
    <property type="match status" value="1"/>
</dbReference>
<dbReference type="InterPro" id="IPR002937">
    <property type="entry name" value="Amino_oxidase"/>
</dbReference>
<dbReference type="InterPro" id="IPR036188">
    <property type="entry name" value="FAD/NAD-bd_sf"/>
</dbReference>
<dbReference type="InterPro" id="IPR050281">
    <property type="entry name" value="Flavin_monoamine_oxidase"/>
</dbReference>
<dbReference type="PANTHER" id="PTHR10742:SF355">
    <property type="entry name" value="AMINE OXIDASE"/>
    <property type="match status" value="1"/>
</dbReference>
<dbReference type="PANTHER" id="PTHR10742">
    <property type="entry name" value="FLAVIN MONOAMINE OXIDASE"/>
    <property type="match status" value="1"/>
</dbReference>
<dbReference type="Pfam" id="PF01593">
    <property type="entry name" value="Amino_oxidase"/>
    <property type="match status" value="1"/>
</dbReference>
<dbReference type="SUPFAM" id="SSF54373">
    <property type="entry name" value="FAD-linked reductases, C-terminal domain"/>
    <property type="match status" value="1"/>
</dbReference>
<dbReference type="SUPFAM" id="SSF51905">
    <property type="entry name" value="FAD/NAD(P)-binding domain"/>
    <property type="match status" value="1"/>
</dbReference>
<reference key="1">
    <citation type="journal article" date="2018" name="J. Proteome Res.">
        <title>In-depth venome of the Brazilian rattlesnake crotalus durissus terrificus: an integrative approach combining its venom gland transcriptome and venom proteome.</title>
        <authorList>
            <person name="Wiezel G.A."/>
            <person name="Shibao P.Y.T."/>
            <person name="Cologna C.T."/>
            <person name="Morandi Filho R."/>
            <person name="Ueira-Vieira C."/>
            <person name="De Pauw E."/>
            <person name="Quinton L."/>
            <person name="Arantes E.C."/>
        </authorList>
    </citation>
    <scope>NUCLEOTIDE SEQUENCE [MRNA]</scope>
    <source>
        <tissue>Venom gland</tissue>
    </source>
</reference>
<reference key="2">
    <citation type="journal article" date="2015" name="J. Venom. Anim. Toxins Incl. Trop. Dis.">
        <title>Bordonein-L, a new L-amino acid oxidase from Crotalus durissus terrificus snake venom: isolation, preliminary characterization and enzyme stability.</title>
        <authorList>
            <person name="Bordon K.C."/>
            <person name="Wiezel G.A."/>
            <person name="Cabral H."/>
            <person name="Arantes E.C."/>
        </authorList>
    </citation>
    <scope>PROTEIN SEQUENCE OF 19-57</scope>
    <scope>FUNCTION</scope>
    <scope>CATALYTIC ACTIVITY</scope>
    <scope>BIOPHYSICOCHEMICAL PROPERTIES</scope>
    <scope>SUBUNIT</scope>
    <scope>SUBCELLULAR LOCATION</scope>
    <scope>GLYCOSYLATION</scope>
    <scope>MASS SPECTROMETRY</scope>
    <source>
        <tissue>Venom</tissue>
    </source>
</reference>
<reference key="3">
    <citation type="journal article" date="2019" name="Biochimie">
        <title>Insights into the structure, function and stability of bordonein-L, the first L-amino acid oxidase from Crotalus durissus terrificus snake venom.</title>
        <authorList>
            <person name="Wiezel G.A."/>
            <person name="Rustiguel J.K."/>
            <person name="Morgenstern D."/>
            <person name="Zoccal K.F."/>
            <person name="Faccioli L.H."/>
            <person name="Nonato M.C."/>
            <person name="Ueberheide B."/>
            <person name="Arantes E.C."/>
        </authorList>
    </citation>
    <scope>PROTEIN SEQUENCE OF 19-31 AND 184-203</scope>
    <scope>IDENTIFICATION BY MASS SPECTROMETRY</scope>
    <scope>3D-STRUCTURE MODELING</scope>
    <scope>GLYCOSYLATION AT ASN-379</scope>
    <scope>DISULFIDE BOND</scope>
    <scope>BIOPHYSICOCHEMICAL PROPERTIES</scope>
    <scope>FUNCTION</scope>
    <scope>CATALYTIC ACTIVITY</scope>
    <scope>SUBSTRATE SPECIFICITY</scope>
    <source>
        <tissue>Venom</tissue>
    </source>
</reference>
<protein>
    <recommendedName>
        <fullName evidence="6">L-amino acid oxidase bordonein-L</fullName>
        <shortName evidence="6">LAAO</shortName>
        <shortName evidence="1">LAO</shortName>
        <ecNumber evidence="4 5">1.4.3.2</ecNumber>
    </recommendedName>
</protein>
<comment type="function">
    <text evidence="4 5">Catalyzes an oxidative deamination of predominantly hydrophobic and aromatic L-amino acids, thus producing hydrogen peroxide that may contribute to the diverse toxic effects of this enzyme (PubMed:26273287, PubMed:31078582). Is highly active on L-Met, L-Leu, L-Trp, and L-Phe, moderately active on L-Ile, L-His, and L-Arg, and weakly or not active on L-Gln, L-Val, L-Asn, L-Ala, L-Lys, L-Ser, L-Thr, L-Pro, L-Asp, L-Gly, L-Tyr, L-Cys and L-Glu (PubMed:31078582). This enzyme exhibits diverse biological activities, such as hemorrhage, hemolysis, edema, apoptosis of vascular endothelial cells or tumor cell lines, antibacterial and antiparasitic activities, as well as regulation of platelet aggregation (PubMed:26273287). Its effect on platelets is controversial, since it either induces aggregation or inhibits agonist-induced aggregation (PubMed:26273287). These different effects are probably due to different experimental conditions (PubMed:26273287). In vitro, the enzyme exhibits cytotoxicity against fibroblast cell line and kills Leishmania amazonensis promastigotes, intensified by substrate addition (PubMed:31078582).</text>
</comment>
<comment type="catalytic activity">
    <reaction evidence="4 5">
        <text>an L-alpha-amino acid + O2 + H2O = a 2-oxocarboxylate + H2O2 + NH4(+)</text>
        <dbReference type="Rhea" id="RHEA:13781"/>
        <dbReference type="ChEBI" id="CHEBI:15377"/>
        <dbReference type="ChEBI" id="CHEBI:15379"/>
        <dbReference type="ChEBI" id="CHEBI:16240"/>
        <dbReference type="ChEBI" id="CHEBI:28938"/>
        <dbReference type="ChEBI" id="CHEBI:35179"/>
        <dbReference type="ChEBI" id="CHEBI:59869"/>
        <dbReference type="EC" id="1.4.3.2"/>
    </reaction>
</comment>
<comment type="catalytic activity">
    <reaction evidence="5">
        <text>L-leucine + O2 + H2O = 4-methyl-2-oxopentanoate + H2O2 + NH4(+)</text>
        <dbReference type="Rhea" id="RHEA:60996"/>
        <dbReference type="ChEBI" id="CHEBI:15377"/>
        <dbReference type="ChEBI" id="CHEBI:15379"/>
        <dbReference type="ChEBI" id="CHEBI:16240"/>
        <dbReference type="ChEBI" id="CHEBI:17865"/>
        <dbReference type="ChEBI" id="CHEBI:28938"/>
        <dbReference type="ChEBI" id="CHEBI:57427"/>
    </reaction>
</comment>
<comment type="catalytic activity">
    <reaction evidence="5">
        <text>L-phenylalanine + O2 + H2O = 3-phenylpyruvate + H2O2 + NH4(+)</text>
        <dbReference type="Rhea" id="RHEA:61240"/>
        <dbReference type="ChEBI" id="CHEBI:15377"/>
        <dbReference type="ChEBI" id="CHEBI:15379"/>
        <dbReference type="ChEBI" id="CHEBI:16240"/>
        <dbReference type="ChEBI" id="CHEBI:18005"/>
        <dbReference type="ChEBI" id="CHEBI:28938"/>
        <dbReference type="ChEBI" id="CHEBI:58095"/>
    </reaction>
</comment>
<comment type="catalytic activity">
    <reaction evidence="5">
        <text>L-tryptophan + O2 + H2O = indole-3-pyruvate + H2O2 + NH4(+)</text>
        <dbReference type="Rhea" id="RHEA:61244"/>
        <dbReference type="ChEBI" id="CHEBI:15377"/>
        <dbReference type="ChEBI" id="CHEBI:15379"/>
        <dbReference type="ChEBI" id="CHEBI:16240"/>
        <dbReference type="ChEBI" id="CHEBI:17640"/>
        <dbReference type="ChEBI" id="CHEBI:28938"/>
        <dbReference type="ChEBI" id="CHEBI:57912"/>
    </reaction>
</comment>
<comment type="catalytic activity">
    <reaction evidence="5">
        <text>L-methionine + O2 + H2O = 4-methylsulfanyl-2-oxobutanoate + H2O2 + NH4(+)</text>
        <dbReference type="Rhea" id="RHEA:61236"/>
        <dbReference type="ChEBI" id="CHEBI:15377"/>
        <dbReference type="ChEBI" id="CHEBI:15379"/>
        <dbReference type="ChEBI" id="CHEBI:16240"/>
        <dbReference type="ChEBI" id="CHEBI:16723"/>
        <dbReference type="ChEBI" id="CHEBI:28938"/>
        <dbReference type="ChEBI" id="CHEBI:57844"/>
    </reaction>
</comment>
<comment type="catalytic activity">
    <reaction evidence="5">
        <text>L-isoleucine + O2 + H2O = (S)-3-methyl-2-oxopentanoate + H2O2 + NH4(+)</text>
        <dbReference type="Rhea" id="RHEA:61232"/>
        <dbReference type="ChEBI" id="CHEBI:15377"/>
        <dbReference type="ChEBI" id="CHEBI:15379"/>
        <dbReference type="ChEBI" id="CHEBI:16240"/>
        <dbReference type="ChEBI" id="CHEBI:28938"/>
        <dbReference type="ChEBI" id="CHEBI:35146"/>
        <dbReference type="ChEBI" id="CHEBI:58045"/>
    </reaction>
</comment>
<comment type="catalytic activity">
    <reaction evidence="5">
        <text>L-arginine + O2 + H2O = 5-guanidino-2-oxopentanoate + H2O2 + NH4(+)</text>
        <dbReference type="Rhea" id="RHEA:51404"/>
        <dbReference type="ChEBI" id="CHEBI:15377"/>
        <dbReference type="ChEBI" id="CHEBI:15379"/>
        <dbReference type="ChEBI" id="CHEBI:16240"/>
        <dbReference type="ChEBI" id="CHEBI:28938"/>
        <dbReference type="ChEBI" id="CHEBI:32682"/>
        <dbReference type="ChEBI" id="CHEBI:58489"/>
    </reaction>
</comment>
<comment type="catalytic activity">
    <reaction evidence="5">
        <text>L-histidine + O2 + H2O = 3-(imidazol-5-yl)pyruvate + H2O2 + NH4(+)</text>
        <dbReference type="Rhea" id="RHEA:61228"/>
        <dbReference type="ChEBI" id="CHEBI:15377"/>
        <dbReference type="ChEBI" id="CHEBI:15379"/>
        <dbReference type="ChEBI" id="CHEBI:16240"/>
        <dbReference type="ChEBI" id="CHEBI:28938"/>
        <dbReference type="ChEBI" id="CHEBI:57595"/>
        <dbReference type="ChEBI" id="CHEBI:58133"/>
    </reaction>
</comment>
<comment type="cofactor">
    <cofactor evidence="1">
        <name>FAD</name>
        <dbReference type="ChEBI" id="CHEBI:57692"/>
    </cofactor>
</comment>
<comment type="biophysicochemical properties">
    <kinetics>
        <KM evidence="5">0.14 mM for L-Phe</KM>
        <KM evidence="5">0.48 mM for L-Trp</KM>
        <KM evidence="5">0.58 mM for L-Leu</KM>
        <KM evidence="5">0.97 mM for L-Met</KM>
        <KM evidence="5">3.9 mM for L-Ile</KM>
    </kinetics>
    <phDependence>
        <text evidence="4">Optimum pH is 7.0. Activity is reduced to about 70% and 60% after incubation at pH 5.0 and pH 9.0, respectively, for 1 hour.</text>
    </phDependence>
</comment>
<comment type="subunit">
    <text evidence="4">Homodimer; non-covalently linked.</text>
</comment>
<comment type="subcellular location">
    <subcellularLocation>
        <location evidence="4">Secreted</location>
    </subcellularLocation>
</comment>
<comment type="tissue specificity">
    <text evidence="8">Expressed by the venom gland.</text>
</comment>
<comment type="PTM">
    <text evidence="4 5">N-glycosylated (PubMed:26273287, PubMed:31078582). N-glycan probably consists of the disaccharide N-acetylglucosamine-fucose (HexNAc-Fuc) (PubMed:31078582).</text>
</comment>
<comment type="mass spectrometry"/>
<comment type="similarity">
    <text evidence="7">Belongs to the flavin monoamine oxidase family. FIG1 subfamily.</text>
</comment>